<name>RL4_ACIF2</name>
<feature type="chain" id="PRO_1000142066" description="Large ribosomal subunit protein uL4">
    <location>
        <begin position="1"/>
        <end position="205"/>
    </location>
</feature>
<feature type="region of interest" description="Disordered" evidence="2">
    <location>
        <begin position="53"/>
        <end position="77"/>
    </location>
</feature>
<feature type="compositionally biased region" description="Basic residues" evidence="2">
    <location>
        <begin position="59"/>
        <end position="70"/>
    </location>
</feature>
<proteinExistence type="inferred from homology"/>
<keyword id="KW-1185">Reference proteome</keyword>
<keyword id="KW-0687">Ribonucleoprotein</keyword>
<keyword id="KW-0689">Ribosomal protein</keyword>
<keyword id="KW-0694">RNA-binding</keyword>
<keyword id="KW-0699">rRNA-binding</keyword>
<accession>B7J468</accession>
<sequence length="205" mass="22324">MQVQSLEVTTGKSSEIEIADGVFGVPYNEALLHQVVVAQMAGMRSANAVQKNRAAVRGGGRKPWKQKGTGRARAGSIRSPIWRGGGRAFPGGNENYTQKVNKKMWAGAMRTVLAELLRQGRLQIIQQEDFGEPRSRLGRDWLSRAGGDNVLLVMGEVPLNLFLGLRNFPRVGIAGWQDVGPADLLQYGRVLLDVEAAARLGEVYG</sequence>
<dbReference type="EMBL" id="CP001219">
    <property type="protein sequence ID" value="ACK79373.1"/>
    <property type="molecule type" value="Genomic_DNA"/>
</dbReference>
<dbReference type="RefSeq" id="WP_009565432.1">
    <property type="nucleotide sequence ID" value="NC_011761.1"/>
</dbReference>
<dbReference type="SMR" id="B7J468"/>
<dbReference type="STRING" id="243159.AFE_0328"/>
<dbReference type="PaxDb" id="243159-AFE_0328"/>
<dbReference type="GeneID" id="65279707"/>
<dbReference type="KEGG" id="afr:AFE_0328"/>
<dbReference type="eggNOG" id="COG0088">
    <property type="taxonomic scope" value="Bacteria"/>
</dbReference>
<dbReference type="HOGENOM" id="CLU_041575_5_2_6"/>
<dbReference type="Proteomes" id="UP000001362">
    <property type="component" value="Chromosome"/>
</dbReference>
<dbReference type="GO" id="GO:1990904">
    <property type="term" value="C:ribonucleoprotein complex"/>
    <property type="evidence" value="ECO:0007669"/>
    <property type="project" value="UniProtKB-KW"/>
</dbReference>
<dbReference type="GO" id="GO:0005840">
    <property type="term" value="C:ribosome"/>
    <property type="evidence" value="ECO:0007669"/>
    <property type="project" value="UniProtKB-KW"/>
</dbReference>
<dbReference type="GO" id="GO:0019843">
    <property type="term" value="F:rRNA binding"/>
    <property type="evidence" value="ECO:0007669"/>
    <property type="project" value="UniProtKB-UniRule"/>
</dbReference>
<dbReference type="GO" id="GO:0003735">
    <property type="term" value="F:structural constituent of ribosome"/>
    <property type="evidence" value="ECO:0007669"/>
    <property type="project" value="InterPro"/>
</dbReference>
<dbReference type="GO" id="GO:0006412">
    <property type="term" value="P:translation"/>
    <property type="evidence" value="ECO:0007669"/>
    <property type="project" value="UniProtKB-UniRule"/>
</dbReference>
<dbReference type="Gene3D" id="3.40.1370.10">
    <property type="match status" value="1"/>
</dbReference>
<dbReference type="HAMAP" id="MF_01328_B">
    <property type="entry name" value="Ribosomal_uL4_B"/>
    <property type="match status" value="1"/>
</dbReference>
<dbReference type="InterPro" id="IPR002136">
    <property type="entry name" value="Ribosomal_uL4"/>
</dbReference>
<dbReference type="InterPro" id="IPR013005">
    <property type="entry name" value="Ribosomal_uL4-like"/>
</dbReference>
<dbReference type="InterPro" id="IPR023574">
    <property type="entry name" value="Ribosomal_uL4_dom_sf"/>
</dbReference>
<dbReference type="NCBIfam" id="TIGR03953">
    <property type="entry name" value="rplD_bact"/>
    <property type="match status" value="1"/>
</dbReference>
<dbReference type="PANTHER" id="PTHR10746">
    <property type="entry name" value="50S RIBOSOMAL PROTEIN L4"/>
    <property type="match status" value="1"/>
</dbReference>
<dbReference type="PANTHER" id="PTHR10746:SF6">
    <property type="entry name" value="LARGE RIBOSOMAL SUBUNIT PROTEIN UL4M"/>
    <property type="match status" value="1"/>
</dbReference>
<dbReference type="Pfam" id="PF00573">
    <property type="entry name" value="Ribosomal_L4"/>
    <property type="match status" value="1"/>
</dbReference>
<dbReference type="SUPFAM" id="SSF52166">
    <property type="entry name" value="Ribosomal protein L4"/>
    <property type="match status" value="1"/>
</dbReference>
<evidence type="ECO:0000255" key="1">
    <source>
        <dbReference type="HAMAP-Rule" id="MF_01328"/>
    </source>
</evidence>
<evidence type="ECO:0000256" key="2">
    <source>
        <dbReference type="SAM" id="MobiDB-lite"/>
    </source>
</evidence>
<evidence type="ECO:0000305" key="3"/>
<gene>
    <name evidence="1" type="primary">rplD</name>
    <name type="ordered locus">AFE_0328</name>
</gene>
<reference key="1">
    <citation type="journal article" date="2008" name="BMC Genomics">
        <title>Acidithiobacillus ferrooxidans metabolism: from genome sequence to industrial applications.</title>
        <authorList>
            <person name="Valdes J."/>
            <person name="Pedroso I."/>
            <person name="Quatrini R."/>
            <person name="Dodson R.J."/>
            <person name="Tettelin H."/>
            <person name="Blake R. II"/>
            <person name="Eisen J.A."/>
            <person name="Holmes D.S."/>
        </authorList>
    </citation>
    <scope>NUCLEOTIDE SEQUENCE [LARGE SCALE GENOMIC DNA]</scope>
    <source>
        <strain>ATCC 23270 / DSM 14882 / CIP 104768 / NCIMB 8455</strain>
    </source>
</reference>
<protein>
    <recommendedName>
        <fullName evidence="1">Large ribosomal subunit protein uL4</fullName>
    </recommendedName>
    <alternativeName>
        <fullName evidence="3">50S ribosomal protein L4</fullName>
    </alternativeName>
</protein>
<comment type="function">
    <text evidence="1">One of the primary rRNA binding proteins, this protein initially binds near the 5'-end of the 23S rRNA. It is important during the early stages of 50S assembly. It makes multiple contacts with different domains of the 23S rRNA in the assembled 50S subunit and ribosome.</text>
</comment>
<comment type="function">
    <text evidence="1">Forms part of the polypeptide exit tunnel.</text>
</comment>
<comment type="subunit">
    <text evidence="1">Part of the 50S ribosomal subunit.</text>
</comment>
<comment type="similarity">
    <text evidence="1">Belongs to the universal ribosomal protein uL4 family.</text>
</comment>
<organism>
    <name type="scientific">Acidithiobacillus ferrooxidans (strain ATCC 23270 / DSM 14882 / CIP 104768 / NCIMB 8455)</name>
    <name type="common">Ferrobacillus ferrooxidans (strain ATCC 23270)</name>
    <dbReference type="NCBI Taxonomy" id="243159"/>
    <lineage>
        <taxon>Bacteria</taxon>
        <taxon>Pseudomonadati</taxon>
        <taxon>Pseudomonadota</taxon>
        <taxon>Acidithiobacillia</taxon>
        <taxon>Acidithiobacillales</taxon>
        <taxon>Acidithiobacillaceae</taxon>
        <taxon>Acidithiobacillus</taxon>
    </lineage>
</organism>